<dbReference type="EMBL" id="BC074658">
    <property type="protein sequence ID" value="AAH74658.1"/>
    <property type="molecule type" value="mRNA"/>
</dbReference>
<dbReference type="RefSeq" id="NP_001004843.1">
    <property type="nucleotide sequence ID" value="NM_001004843.1"/>
</dbReference>
<dbReference type="RefSeq" id="XP_012821811.1">
    <property type="nucleotide sequence ID" value="XM_012966357.3"/>
</dbReference>
<dbReference type="SMR" id="Q6GL52"/>
<dbReference type="FunCoup" id="Q6GL52">
    <property type="interactions" value="1479"/>
</dbReference>
<dbReference type="PaxDb" id="8364-ENSXETP00000057402"/>
<dbReference type="DNASU" id="448126"/>
<dbReference type="GeneID" id="448126"/>
<dbReference type="KEGG" id="xtr:448126"/>
<dbReference type="AGR" id="Xenbase:XB-GENE-1004140"/>
<dbReference type="CTD" id="64763"/>
<dbReference type="Xenbase" id="XB-GENE-1004140">
    <property type="gene designation" value="znf574"/>
</dbReference>
<dbReference type="eggNOG" id="KOG1721">
    <property type="taxonomic scope" value="Eukaryota"/>
</dbReference>
<dbReference type="HOGENOM" id="CLU_002678_24_1_1"/>
<dbReference type="InParanoid" id="Q6GL52"/>
<dbReference type="OMA" id="DCAKPFN"/>
<dbReference type="OrthoDB" id="8922241at2759"/>
<dbReference type="PhylomeDB" id="Q6GL52"/>
<dbReference type="TreeFam" id="TF350791"/>
<dbReference type="Proteomes" id="UP000008143">
    <property type="component" value="Chromosome 7"/>
</dbReference>
<dbReference type="Bgee" id="ENSXETG00000027536">
    <property type="expression patterns" value="Expressed in blastula and 13 other cell types or tissues"/>
</dbReference>
<dbReference type="GO" id="GO:0005634">
    <property type="term" value="C:nucleus"/>
    <property type="evidence" value="ECO:0007669"/>
    <property type="project" value="UniProtKB-SubCell"/>
</dbReference>
<dbReference type="GO" id="GO:0003677">
    <property type="term" value="F:DNA binding"/>
    <property type="evidence" value="ECO:0007669"/>
    <property type="project" value="UniProtKB-KW"/>
</dbReference>
<dbReference type="GO" id="GO:0008270">
    <property type="term" value="F:zinc ion binding"/>
    <property type="evidence" value="ECO:0007669"/>
    <property type="project" value="UniProtKB-KW"/>
</dbReference>
<dbReference type="FunFam" id="3.30.160.60:FF:004175">
    <property type="match status" value="1"/>
</dbReference>
<dbReference type="FunFam" id="3.30.160.60:FF:000965">
    <property type="entry name" value="Neurotrophin receptor-interacting factor homolog"/>
    <property type="match status" value="1"/>
</dbReference>
<dbReference type="FunFam" id="3.30.160.60:FF:002110">
    <property type="entry name" value="Zinc finger protein 1053"/>
    <property type="match status" value="1"/>
</dbReference>
<dbReference type="FunFam" id="3.30.160.60:FF:000380">
    <property type="entry name" value="zinc finger protein 2 isoform X2"/>
    <property type="match status" value="1"/>
</dbReference>
<dbReference type="FunFam" id="3.30.160.60:FF:002090">
    <property type="entry name" value="Zinc finger protein 473"/>
    <property type="match status" value="1"/>
</dbReference>
<dbReference type="FunFam" id="3.30.160.60:FF:000202">
    <property type="entry name" value="Zinc finger protein 574"/>
    <property type="match status" value="1"/>
</dbReference>
<dbReference type="FunFam" id="3.30.160.60:FF:001289">
    <property type="entry name" value="Zinc finger protein 574"/>
    <property type="match status" value="1"/>
</dbReference>
<dbReference type="FunFam" id="3.30.160.60:FF:003769">
    <property type="entry name" value="Zinc finger protein 574"/>
    <property type="match status" value="1"/>
</dbReference>
<dbReference type="FunFam" id="3.30.160.60:FF:000381">
    <property type="entry name" value="zinc finger protein 574"/>
    <property type="match status" value="1"/>
</dbReference>
<dbReference type="FunFam" id="3.30.160.60:FF:001184">
    <property type="entry name" value="zinc finger protein 574"/>
    <property type="match status" value="1"/>
</dbReference>
<dbReference type="FunFam" id="3.30.160.60:FF:000176">
    <property type="entry name" value="zinc finger protein 70"/>
    <property type="match status" value="1"/>
</dbReference>
<dbReference type="Gene3D" id="3.30.160.60">
    <property type="entry name" value="Classic Zinc Finger"/>
    <property type="match status" value="14"/>
</dbReference>
<dbReference type="InterPro" id="IPR036236">
    <property type="entry name" value="Znf_C2H2_sf"/>
</dbReference>
<dbReference type="InterPro" id="IPR013087">
    <property type="entry name" value="Znf_C2H2_type"/>
</dbReference>
<dbReference type="PANTHER" id="PTHR24376">
    <property type="entry name" value="ZINC FINGER PROTEIN"/>
    <property type="match status" value="1"/>
</dbReference>
<dbReference type="PANTHER" id="PTHR24376:SF69">
    <property type="entry name" value="ZINC FINGER PROTEIN 574"/>
    <property type="match status" value="1"/>
</dbReference>
<dbReference type="Pfam" id="PF00096">
    <property type="entry name" value="zf-C2H2"/>
    <property type="match status" value="7"/>
</dbReference>
<dbReference type="Pfam" id="PF13912">
    <property type="entry name" value="zf-C2H2_6"/>
    <property type="match status" value="3"/>
</dbReference>
<dbReference type="Pfam" id="PF12874">
    <property type="entry name" value="zf-met"/>
    <property type="match status" value="1"/>
</dbReference>
<dbReference type="SMART" id="SM00355">
    <property type="entry name" value="ZnF_C2H2"/>
    <property type="match status" value="20"/>
</dbReference>
<dbReference type="SUPFAM" id="SSF57667">
    <property type="entry name" value="beta-beta-alpha zinc fingers"/>
    <property type="match status" value="10"/>
</dbReference>
<dbReference type="PROSITE" id="PS00028">
    <property type="entry name" value="ZINC_FINGER_C2H2_1"/>
    <property type="match status" value="18"/>
</dbReference>
<dbReference type="PROSITE" id="PS50157">
    <property type="entry name" value="ZINC_FINGER_C2H2_2"/>
    <property type="match status" value="19"/>
</dbReference>
<reference key="1">
    <citation type="submission" date="2004-06" db="EMBL/GenBank/DDBJ databases">
        <authorList>
            <consortium name="NIH - Xenopus Gene Collection (XGC) project"/>
        </authorList>
    </citation>
    <scope>NUCLEOTIDE SEQUENCE [LARGE SCALE MRNA]</scope>
    <source>
        <tissue>Embryo</tissue>
    </source>
</reference>
<gene>
    <name type="primary">znf574</name>
</gene>
<proteinExistence type="evidence at transcript level"/>
<comment type="function">
    <text>May be involved in transcriptional regulation.</text>
</comment>
<comment type="subcellular location">
    <subcellularLocation>
        <location evidence="3">Nucleus</location>
    </subcellularLocation>
</comment>
<comment type="similarity">
    <text evidence="3">Belongs to the krueppel C2H2-type zinc-finger protein family.</text>
</comment>
<feature type="chain" id="PRO_0000274866" description="Zinc finger protein 574">
    <location>
        <begin position="1"/>
        <end position="857"/>
    </location>
</feature>
<feature type="zinc finger region" description="C2H2-type 1" evidence="1">
    <location>
        <begin position="15"/>
        <end position="37"/>
    </location>
</feature>
<feature type="zinc finger region" description="C2H2-type 2" evidence="1">
    <location>
        <begin position="58"/>
        <end position="80"/>
    </location>
</feature>
<feature type="zinc finger region" description="C2H2-type 3" evidence="1">
    <location>
        <begin position="99"/>
        <end position="121"/>
    </location>
</feature>
<feature type="zinc finger region" description="C2H2-type 4" evidence="1">
    <location>
        <begin position="206"/>
        <end position="228"/>
    </location>
</feature>
<feature type="zinc finger region" description="C2H2-type 5" evidence="1">
    <location>
        <begin position="297"/>
        <end position="319"/>
    </location>
</feature>
<feature type="zinc finger region" description="C2H2-type 6" evidence="1">
    <location>
        <begin position="324"/>
        <end position="346"/>
    </location>
</feature>
<feature type="zinc finger region" description="C2H2-type 7" evidence="1">
    <location>
        <begin position="352"/>
        <end position="374"/>
    </location>
</feature>
<feature type="zinc finger region" description="C2H2-type 8" evidence="1">
    <location>
        <begin position="380"/>
        <end position="401"/>
    </location>
</feature>
<feature type="zinc finger region" description="C2H2-type 9" evidence="1">
    <location>
        <begin position="428"/>
        <end position="451"/>
    </location>
</feature>
<feature type="zinc finger region" description="C2H2-type 10" evidence="1">
    <location>
        <begin position="457"/>
        <end position="479"/>
    </location>
</feature>
<feature type="zinc finger region" description="C2H2-type 11" evidence="1">
    <location>
        <begin position="485"/>
        <end position="507"/>
    </location>
</feature>
<feature type="zinc finger region" description="C2H2-type 12" evidence="1">
    <location>
        <begin position="513"/>
        <end position="535"/>
    </location>
</feature>
<feature type="zinc finger region" description="C2H2-type 13" evidence="1">
    <location>
        <begin position="541"/>
        <end position="563"/>
    </location>
</feature>
<feature type="zinc finger region" description="C2H2-type 14" evidence="1">
    <location>
        <begin position="569"/>
        <end position="591"/>
    </location>
</feature>
<feature type="zinc finger region" description="C2H2-type 15; degenerate" evidence="1">
    <location>
        <begin position="597"/>
        <end position="619"/>
    </location>
</feature>
<feature type="zinc finger region" description="C2H2-type 16" evidence="1">
    <location>
        <begin position="628"/>
        <end position="651"/>
    </location>
</feature>
<feature type="zinc finger region" description="C2H2-type 17" evidence="1">
    <location>
        <begin position="681"/>
        <end position="703"/>
    </location>
</feature>
<feature type="zinc finger region" description="C2H2-type 18" evidence="1">
    <location>
        <begin position="709"/>
        <end position="731"/>
    </location>
</feature>
<feature type="zinc finger region" description="C2H2-type 19" evidence="1">
    <location>
        <begin position="737"/>
        <end position="759"/>
    </location>
</feature>
<feature type="zinc finger region" description="C2H2-type 20" evidence="1">
    <location>
        <begin position="765"/>
        <end position="787"/>
    </location>
</feature>
<feature type="region of interest" description="Disordered" evidence="2">
    <location>
        <begin position="648"/>
        <end position="678"/>
    </location>
</feature>
<feature type="compositionally biased region" description="Polar residues" evidence="2">
    <location>
        <begin position="651"/>
        <end position="663"/>
    </location>
</feature>
<organism>
    <name type="scientific">Xenopus tropicalis</name>
    <name type="common">Western clawed frog</name>
    <name type="synonym">Silurana tropicalis</name>
    <dbReference type="NCBI Taxonomy" id="8364"/>
    <lineage>
        <taxon>Eukaryota</taxon>
        <taxon>Metazoa</taxon>
        <taxon>Chordata</taxon>
        <taxon>Craniata</taxon>
        <taxon>Vertebrata</taxon>
        <taxon>Euteleostomi</taxon>
        <taxon>Amphibia</taxon>
        <taxon>Batrachia</taxon>
        <taxon>Anura</taxon>
        <taxon>Pipoidea</taxon>
        <taxon>Pipidae</taxon>
        <taxon>Xenopodinae</taxon>
        <taxon>Xenopus</taxon>
        <taxon>Silurana</taxon>
    </lineage>
</organism>
<accession>Q6GL52</accession>
<evidence type="ECO:0000255" key="1">
    <source>
        <dbReference type="PROSITE-ProRule" id="PRU00042"/>
    </source>
</evidence>
<evidence type="ECO:0000256" key="2">
    <source>
        <dbReference type="SAM" id="MobiDB-lite"/>
    </source>
</evidence>
<evidence type="ECO:0000305" key="3"/>
<sequence>MTDSEETVLYVEHRYVCSECGEEYPSLEEALEHQQSHAAALQEPQYQIVGVNSLENQYQCLECGLLLRTPEDLLAHQELHPTQNEIQKPKRPTRSEIHYECPECKALFNSQDVWMAHRYTHMQVQDVSHSKIVLQTDDHVIEDGLQLMCAPAVPSEVHLVTGDPHFHVSTPSSASVSHTQVLVDLEHSYKKNEGAGEDCAMELLLYKCSECTQLFQTPGEFLEHQGTHFSGQERISDTNSHLDQTPQLSLNGQEKEPIINQGNTCTDYQAENKELLVQPEGEQAEQDSWTVDREPVFSCGDCSETFQTTKDLEEHQISHQNGPFSCPLCSKVFPTYPEVGEHLKSHRSESRYLCVDCGLAFVSEAVLLNHRRSHLANPLFTCECGLTFLNMTRFLYHRRVHSSKQPDTGAVEEKKTVNSIAPSPAGNFHCDPCGKDFPLLSQFLRHQRFVHALERRHKCPTCGKHFKKGSHLRTHMLTHTGERPYSCTVCSKSFNSQANLLRHRLTHTGEKPYKCQLCGKAFSQSSTLQQHQYVHGQAYLYKCNECGINFHRPYRLLLHQYHHTGEYPYKCQDCGLSFLLKRLLEVHQLGHRGEEPHRCRECGTNFPSVQRLQDHRCSKAGDGGGEKLECPICGKKVTSDAHLNTHVAAQHSGNKRSNVSSGKGTPVLPRNKLKGGGGKNLECSDCHKTFSTETSLQVHRRIHTGERPYPCPDCGKAFRQSTHLKDHRRLHTGEKPFKCDVCGKAFTIAVRLSEHKRIHTGERPHSCPDCGRAYRSFSNLWKHRKLHREQQVQLQEPESQPADLSSTVAILETVETIPIIETVEIFPEGSTISVQDIQFETLQVENIHLGNIQIGTL</sequence>
<protein>
    <recommendedName>
        <fullName>Zinc finger protein 574</fullName>
    </recommendedName>
</protein>
<name>ZN574_XENTR</name>
<keyword id="KW-0238">DNA-binding</keyword>
<keyword id="KW-0479">Metal-binding</keyword>
<keyword id="KW-0539">Nucleus</keyword>
<keyword id="KW-1185">Reference proteome</keyword>
<keyword id="KW-0677">Repeat</keyword>
<keyword id="KW-0804">Transcription</keyword>
<keyword id="KW-0805">Transcription regulation</keyword>
<keyword id="KW-0862">Zinc</keyword>
<keyword id="KW-0863">Zinc-finger</keyword>